<sequence length="293" mass="31876">MAQHYKTIGLIGKPNHDGASATIQTLHKYLLANEYKVIVEVSVAQSLDIKKMKTGTLTDIGEQADLAIVIGGDGYMLGAARVLACFDIGVIGVNRGNLGFLTDLSPSEIIKPLEQILSGKSRSEQRFIIEAEVYRHGKLKSSNSAVNEAVLHAGKVASMIEFEVYIDGTFMFSQRSDGLIISTPTGSTAYSMSAGGPILTPNLNALSLVPMFPHTLTSRPIVVDGNSEIKLILANDNHENLQVSCDGHVILTVMPGDEVIIKKSECSIRLIHPLDHEYFNVLRNKLSWGNKLY</sequence>
<proteinExistence type="inferred from homology"/>
<gene>
    <name evidence="1" type="primary">nadK</name>
    <name type="ordered locus">CPS_3824</name>
</gene>
<comment type="function">
    <text evidence="1">Involved in the regulation of the intracellular balance of NAD and NADP, and is a key enzyme in the biosynthesis of NADP. Catalyzes specifically the phosphorylation on 2'-hydroxyl of the adenosine moiety of NAD to yield NADP.</text>
</comment>
<comment type="catalytic activity">
    <reaction evidence="1">
        <text>NAD(+) + ATP = ADP + NADP(+) + H(+)</text>
        <dbReference type="Rhea" id="RHEA:18629"/>
        <dbReference type="ChEBI" id="CHEBI:15378"/>
        <dbReference type="ChEBI" id="CHEBI:30616"/>
        <dbReference type="ChEBI" id="CHEBI:57540"/>
        <dbReference type="ChEBI" id="CHEBI:58349"/>
        <dbReference type="ChEBI" id="CHEBI:456216"/>
        <dbReference type="EC" id="2.7.1.23"/>
    </reaction>
</comment>
<comment type="cofactor">
    <cofactor evidence="1">
        <name>a divalent metal cation</name>
        <dbReference type="ChEBI" id="CHEBI:60240"/>
    </cofactor>
</comment>
<comment type="subcellular location">
    <subcellularLocation>
        <location evidence="1">Cytoplasm</location>
    </subcellularLocation>
</comment>
<comment type="similarity">
    <text evidence="1">Belongs to the NAD kinase family.</text>
</comment>
<name>NADK_COLP3</name>
<keyword id="KW-0067">ATP-binding</keyword>
<keyword id="KW-0963">Cytoplasm</keyword>
<keyword id="KW-0418">Kinase</keyword>
<keyword id="KW-0520">NAD</keyword>
<keyword id="KW-0521">NADP</keyword>
<keyword id="KW-0547">Nucleotide-binding</keyword>
<keyword id="KW-0808">Transferase</keyword>
<organism>
    <name type="scientific">Colwellia psychrerythraea (strain 34H / ATCC BAA-681)</name>
    <name type="common">Vibrio psychroerythus</name>
    <dbReference type="NCBI Taxonomy" id="167879"/>
    <lineage>
        <taxon>Bacteria</taxon>
        <taxon>Pseudomonadati</taxon>
        <taxon>Pseudomonadota</taxon>
        <taxon>Gammaproteobacteria</taxon>
        <taxon>Alteromonadales</taxon>
        <taxon>Colwelliaceae</taxon>
        <taxon>Colwellia</taxon>
    </lineage>
</organism>
<reference key="1">
    <citation type="journal article" date="2005" name="Proc. Natl. Acad. Sci. U.S.A.">
        <title>The psychrophilic lifestyle as revealed by the genome sequence of Colwellia psychrerythraea 34H through genomic and proteomic analyses.</title>
        <authorList>
            <person name="Methe B.A."/>
            <person name="Nelson K.E."/>
            <person name="Deming J.W."/>
            <person name="Momen B."/>
            <person name="Melamud E."/>
            <person name="Zhang X."/>
            <person name="Moult J."/>
            <person name="Madupu R."/>
            <person name="Nelson W.C."/>
            <person name="Dodson R.J."/>
            <person name="Brinkac L.M."/>
            <person name="Daugherty S.C."/>
            <person name="Durkin A.S."/>
            <person name="DeBoy R.T."/>
            <person name="Kolonay J.F."/>
            <person name="Sullivan S.A."/>
            <person name="Zhou L."/>
            <person name="Davidsen T.M."/>
            <person name="Wu M."/>
            <person name="Huston A.L."/>
            <person name="Lewis M."/>
            <person name="Weaver B."/>
            <person name="Weidman J.F."/>
            <person name="Khouri H."/>
            <person name="Utterback T.R."/>
            <person name="Feldblyum T.V."/>
            <person name="Fraser C.M."/>
        </authorList>
    </citation>
    <scope>NUCLEOTIDE SEQUENCE [LARGE SCALE GENOMIC DNA]</scope>
    <source>
        <strain>34H / ATCC BAA-681</strain>
    </source>
</reference>
<accession>Q47XI3</accession>
<dbReference type="EC" id="2.7.1.23" evidence="1"/>
<dbReference type="EMBL" id="CP000083">
    <property type="protein sequence ID" value="AAZ24634.1"/>
    <property type="molecule type" value="Genomic_DNA"/>
</dbReference>
<dbReference type="RefSeq" id="WP_011044573.1">
    <property type="nucleotide sequence ID" value="NC_003910.7"/>
</dbReference>
<dbReference type="SMR" id="Q47XI3"/>
<dbReference type="STRING" id="167879.CPS_3824"/>
<dbReference type="KEGG" id="cps:CPS_3824"/>
<dbReference type="eggNOG" id="COG0061">
    <property type="taxonomic scope" value="Bacteria"/>
</dbReference>
<dbReference type="HOGENOM" id="CLU_008831_0_1_6"/>
<dbReference type="Proteomes" id="UP000000547">
    <property type="component" value="Chromosome"/>
</dbReference>
<dbReference type="GO" id="GO:0005737">
    <property type="term" value="C:cytoplasm"/>
    <property type="evidence" value="ECO:0007669"/>
    <property type="project" value="UniProtKB-SubCell"/>
</dbReference>
<dbReference type="GO" id="GO:0005524">
    <property type="term" value="F:ATP binding"/>
    <property type="evidence" value="ECO:0007669"/>
    <property type="project" value="UniProtKB-KW"/>
</dbReference>
<dbReference type="GO" id="GO:0046872">
    <property type="term" value="F:metal ion binding"/>
    <property type="evidence" value="ECO:0007669"/>
    <property type="project" value="UniProtKB-UniRule"/>
</dbReference>
<dbReference type="GO" id="GO:0051287">
    <property type="term" value="F:NAD binding"/>
    <property type="evidence" value="ECO:0007669"/>
    <property type="project" value="UniProtKB-ARBA"/>
</dbReference>
<dbReference type="GO" id="GO:0003951">
    <property type="term" value="F:NAD+ kinase activity"/>
    <property type="evidence" value="ECO:0007669"/>
    <property type="project" value="UniProtKB-UniRule"/>
</dbReference>
<dbReference type="GO" id="GO:0019674">
    <property type="term" value="P:NAD metabolic process"/>
    <property type="evidence" value="ECO:0007669"/>
    <property type="project" value="InterPro"/>
</dbReference>
<dbReference type="GO" id="GO:0006741">
    <property type="term" value="P:NADP biosynthetic process"/>
    <property type="evidence" value="ECO:0007669"/>
    <property type="project" value="UniProtKB-UniRule"/>
</dbReference>
<dbReference type="FunFam" id="2.60.200.30:FF:000001">
    <property type="entry name" value="NAD kinase"/>
    <property type="match status" value="1"/>
</dbReference>
<dbReference type="Gene3D" id="3.40.50.10330">
    <property type="entry name" value="Probable inorganic polyphosphate/atp-NAD kinase, domain 1"/>
    <property type="match status" value="1"/>
</dbReference>
<dbReference type="Gene3D" id="2.60.200.30">
    <property type="entry name" value="Probable inorganic polyphosphate/atp-NAD kinase, domain 2"/>
    <property type="match status" value="1"/>
</dbReference>
<dbReference type="HAMAP" id="MF_00361">
    <property type="entry name" value="NAD_kinase"/>
    <property type="match status" value="1"/>
</dbReference>
<dbReference type="InterPro" id="IPR017438">
    <property type="entry name" value="ATP-NAD_kinase_N"/>
</dbReference>
<dbReference type="InterPro" id="IPR017437">
    <property type="entry name" value="ATP-NAD_kinase_PpnK-typ_C"/>
</dbReference>
<dbReference type="InterPro" id="IPR016064">
    <property type="entry name" value="NAD/diacylglycerol_kinase_sf"/>
</dbReference>
<dbReference type="InterPro" id="IPR002504">
    <property type="entry name" value="NADK"/>
</dbReference>
<dbReference type="NCBIfam" id="NF002306">
    <property type="entry name" value="PRK01231.1"/>
    <property type="match status" value="1"/>
</dbReference>
<dbReference type="NCBIfam" id="NF002893">
    <property type="entry name" value="PRK03378.1"/>
    <property type="match status" value="1"/>
</dbReference>
<dbReference type="PANTHER" id="PTHR20275">
    <property type="entry name" value="NAD KINASE"/>
    <property type="match status" value="1"/>
</dbReference>
<dbReference type="PANTHER" id="PTHR20275:SF0">
    <property type="entry name" value="NAD KINASE"/>
    <property type="match status" value="1"/>
</dbReference>
<dbReference type="Pfam" id="PF01513">
    <property type="entry name" value="NAD_kinase"/>
    <property type="match status" value="1"/>
</dbReference>
<dbReference type="Pfam" id="PF20143">
    <property type="entry name" value="NAD_kinase_C"/>
    <property type="match status" value="1"/>
</dbReference>
<dbReference type="SUPFAM" id="SSF111331">
    <property type="entry name" value="NAD kinase/diacylglycerol kinase-like"/>
    <property type="match status" value="1"/>
</dbReference>
<feature type="chain" id="PRO_0000229625" description="NAD kinase">
    <location>
        <begin position="1"/>
        <end position="293"/>
    </location>
</feature>
<feature type="active site" description="Proton acceptor" evidence="1">
    <location>
        <position position="73"/>
    </location>
</feature>
<feature type="binding site" evidence="1">
    <location>
        <begin position="73"/>
        <end position="74"/>
    </location>
    <ligand>
        <name>NAD(+)</name>
        <dbReference type="ChEBI" id="CHEBI:57540"/>
    </ligand>
</feature>
<feature type="binding site" evidence="1">
    <location>
        <begin position="147"/>
        <end position="148"/>
    </location>
    <ligand>
        <name>NAD(+)</name>
        <dbReference type="ChEBI" id="CHEBI:57540"/>
    </ligand>
</feature>
<feature type="binding site" evidence="1">
    <location>
        <position position="175"/>
    </location>
    <ligand>
        <name>NAD(+)</name>
        <dbReference type="ChEBI" id="CHEBI:57540"/>
    </ligand>
</feature>
<feature type="binding site" evidence="1">
    <location>
        <position position="177"/>
    </location>
    <ligand>
        <name>NAD(+)</name>
        <dbReference type="ChEBI" id="CHEBI:57540"/>
    </ligand>
</feature>
<feature type="binding site" evidence="1">
    <location>
        <begin position="188"/>
        <end position="193"/>
    </location>
    <ligand>
        <name>NAD(+)</name>
        <dbReference type="ChEBI" id="CHEBI:57540"/>
    </ligand>
</feature>
<evidence type="ECO:0000255" key="1">
    <source>
        <dbReference type="HAMAP-Rule" id="MF_00361"/>
    </source>
</evidence>
<protein>
    <recommendedName>
        <fullName evidence="1">NAD kinase</fullName>
        <ecNumber evidence="1">2.7.1.23</ecNumber>
    </recommendedName>
    <alternativeName>
        <fullName evidence="1">ATP-dependent NAD kinase</fullName>
    </alternativeName>
</protein>